<keyword id="KW-0413">Isomerase</keyword>
<keyword id="KW-0464">Manganese</keyword>
<keyword id="KW-0479">Metal-binding</keyword>
<reference key="1">
    <citation type="journal article" date="2013" name="Biosci. Biotechnol. Biochem.">
        <title>Gene cloning and characterization of L-ribulose 3-epimerase from Mesorhizobium loti and its application to rare sugar production.</title>
        <authorList>
            <person name="Uechi K."/>
            <person name="Takata G."/>
            <person name="Fukai Y."/>
            <person name="Yoshihara A."/>
            <person name="Morimoto K."/>
        </authorList>
    </citation>
    <scope>FUNCTION</scope>
    <scope>CATALYTIC ACTIVITY</scope>
    <scope>BIOPHYSICOCHEMICAL PROPERTIES</scope>
    <scope>ACTIVITY REGULATION</scope>
    <scope>COFACTOR</scope>
    <scope>SUBSTRATE SPECIFICITY</scope>
    <scope>SUBUNIT</scope>
    <source>
        <strain>LMG 29417 / CECT 9101 / MAFF 303099</strain>
    </source>
</reference>
<reference key="2">
    <citation type="journal article" date="2000" name="DNA Res.">
        <title>Complete genome structure of the nitrogen-fixing symbiotic bacterium Mesorhizobium loti.</title>
        <authorList>
            <person name="Kaneko T."/>
            <person name="Nakamura Y."/>
            <person name="Sato S."/>
            <person name="Asamizu E."/>
            <person name="Kato T."/>
            <person name="Sasamoto S."/>
            <person name="Watanabe A."/>
            <person name="Idesawa K."/>
            <person name="Ishikawa A."/>
            <person name="Kawashima K."/>
            <person name="Kimura T."/>
            <person name="Kishida Y."/>
            <person name="Kiyokawa C."/>
            <person name="Kohara M."/>
            <person name="Matsumoto M."/>
            <person name="Matsuno A."/>
            <person name="Mochizuki Y."/>
            <person name="Nakayama S."/>
            <person name="Nakazaki N."/>
            <person name="Shimpo S."/>
            <person name="Sugimoto M."/>
            <person name="Takeuchi C."/>
            <person name="Yamada M."/>
            <person name="Tabata S."/>
        </authorList>
    </citation>
    <scope>NUCLEOTIDE SEQUENCE [LARGE SCALE GENOMIC DNA]</scope>
    <source>
        <strain>LMG 29417 / CECT 9101 / MAFF 303099</strain>
    </source>
</reference>
<accession>Q98FW0</accession>
<protein>
    <recommendedName>
        <fullName evidence="4">L-ribulose 3-epimerase</fullName>
        <shortName evidence="4">L-RE</shortName>
    </recommendedName>
    <alternativeName>
        <fullName evidence="4">D-tagatose 3-epimerase</fullName>
        <shortName evidence="4">DTE</shortName>
        <ecNumber evidence="3">5.1.3.31</ecNumber>
    </alternativeName>
    <alternativeName>
        <fullName evidence="4">Ketose 3-epimerase</fullName>
    </alternativeName>
</protein>
<evidence type="ECO:0000250" key="1">
    <source>
        <dbReference type="UniProtKB" id="O50580"/>
    </source>
</evidence>
<evidence type="ECO:0000250" key="2">
    <source>
        <dbReference type="UniProtKB" id="Q9WYP7"/>
    </source>
</evidence>
<evidence type="ECO:0000269" key="3">
    <source>
    </source>
</evidence>
<evidence type="ECO:0000303" key="4">
    <source>
    </source>
</evidence>
<evidence type="ECO:0000305" key="5"/>
<dbReference type="EC" id="5.1.3.31" evidence="3"/>
<dbReference type="EMBL" id="BA000012">
    <property type="protein sequence ID" value="BAB50456.1"/>
    <property type="molecule type" value="Genomic_DNA"/>
</dbReference>
<dbReference type="RefSeq" id="WP_010911802.1">
    <property type="nucleotide sequence ID" value="NC_002678.2"/>
</dbReference>
<dbReference type="SMR" id="Q98FW0"/>
<dbReference type="KEGG" id="mlo:mll3595"/>
<dbReference type="PATRIC" id="fig|266835.9.peg.2866"/>
<dbReference type="eggNOG" id="COG1082">
    <property type="taxonomic scope" value="Bacteria"/>
</dbReference>
<dbReference type="HOGENOM" id="CLU_050006_8_2_5"/>
<dbReference type="Proteomes" id="UP000000552">
    <property type="component" value="Chromosome"/>
</dbReference>
<dbReference type="GO" id="GO:0016853">
    <property type="term" value="F:isomerase activity"/>
    <property type="evidence" value="ECO:0007669"/>
    <property type="project" value="UniProtKB-KW"/>
</dbReference>
<dbReference type="GO" id="GO:0046872">
    <property type="term" value="F:metal ion binding"/>
    <property type="evidence" value="ECO:0007669"/>
    <property type="project" value="UniProtKB-KW"/>
</dbReference>
<dbReference type="Gene3D" id="3.20.20.150">
    <property type="entry name" value="Divalent-metal-dependent TIM barrel enzymes"/>
    <property type="match status" value="1"/>
</dbReference>
<dbReference type="InterPro" id="IPR050417">
    <property type="entry name" value="Sugar_Epim/Isomerase"/>
</dbReference>
<dbReference type="InterPro" id="IPR036237">
    <property type="entry name" value="Xyl_isomerase-like_sf"/>
</dbReference>
<dbReference type="InterPro" id="IPR013022">
    <property type="entry name" value="Xyl_isomerase-like_TIM-brl"/>
</dbReference>
<dbReference type="PANTHER" id="PTHR43489:SF7">
    <property type="entry name" value="3-DEHYDRO-D-GULOSIDE 4-EPIMERASE-RELATED"/>
    <property type="match status" value="1"/>
</dbReference>
<dbReference type="PANTHER" id="PTHR43489">
    <property type="entry name" value="ISOMERASE"/>
    <property type="match status" value="1"/>
</dbReference>
<dbReference type="Pfam" id="PF01261">
    <property type="entry name" value="AP_endonuc_2"/>
    <property type="match status" value="1"/>
</dbReference>
<dbReference type="SUPFAM" id="SSF51658">
    <property type="entry name" value="Xylose isomerase-like"/>
    <property type="match status" value="1"/>
</dbReference>
<proteinExistence type="evidence at protein level"/>
<comment type="function">
    <text evidence="3">Catalyzes the epimerization of various ketoses at the C(3) position. It is able to interconvert L-ribulose with high efficiency. The enzyme can also accept other ketopentoses such as D-psicose and D-tagatose with lower efficiency.</text>
</comment>
<comment type="catalytic activity">
    <reaction evidence="3">
        <text>L-ribulose = L-xylulose</text>
        <dbReference type="Rhea" id="RHEA:53268"/>
        <dbReference type="ChEBI" id="CHEBI:16880"/>
        <dbReference type="ChEBI" id="CHEBI:17399"/>
        <dbReference type="EC" id="5.1.3.31"/>
    </reaction>
</comment>
<comment type="catalytic activity">
    <reaction evidence="3">
        <text>keto-D-tagatose = keto-D-sorbose</text>
        <dbReference type="Rhea" id="RHEA:43048"/>
        <dbReference type="ChEBI" id="CHEBI:13022"/>
        <dbReference type="ChEBI" id="CHEBI:47693"/>
        <dbReference type="EC" id="5.1.3.31"/>
    </reaction>
</comment>
<comment type="catalytic activity">
    <reaction evidence="3">
        <text>D-allulose = keto-D-fructose</text>
        <dbReference type="Rhea" id="RHEA:42360"/>
        <dbReference type="ChEBI" id="CHEBI:27605"/>
        <dbReference type="ChEBI" id="CHEBI:48095"/>
        <dbReference type="EC" id="5.1.3.31"/>
    </reaction>
</comment>
<comment type="cofactor">
    <cofactor evidence="3">
        <name>Mn(2+)</name>
        <dbReference type="ChEBI" id="CHEBI:29035"/>
    </cofactor>
    <text evidence="3">It can also use Fe(2+).</text>
</comment>
<comment type="activity regulation">
    <text evidence="3">Strongly inhibited by Co(2+) and Ni(2+), and slightly inhibited by EDTA.</text>
</comment>
<comment type="biophysicochemical properties">
    <kinetics>
        <KM evidence="3">58 mM for D-psicose</KM>
        <KM evidence="3">140 mM for D-tagatose</KM>
        <KM evidence="3">230 mM for L-xylulose</KM>
        <KM evidence="3">291 mM for L-ribulose</KM>
        <Vmax evidence="3">416.0 umol/min/mg enzyme with L-ribulose as substrate</Vmax>
        <Vmax evidence="3">290.0 umol/min/mg enzyme with L-xylulose as substrate</Vmax>
        <Vmax evidence="3">50.0 umol/min/mg enzyme with D-tagatose as substrate</Vmax>
        <Vmax evidence="3">10.0 umol/min/mg enzyme with D-psicose as substrate</Vmax>
        <text evidence="3">kcat is 0.34 min(-1) for epimerase activity with D-psicose as substrate. kcat is 3.4 min(-1) for epimerase activity with D-tagatose as substrate. kcat is 8.5 min(-1) for epimerase activity with L-xylulose as substrate. kcat is 13 min(-1) for epimerase activity with L-ribulose as substrate.</text>
    </kinetics>
    <phDependence>
        <text evidence="3">Optimum pH is 8. The enzyme is stable between 7 and 10.</text>
    </phDependence>
    <temperatureDependence>
        <text evidence="3">Optimum temperature is around 60 degrees Celsius. The enzyme is stable below 60 degrees Celsius.</text>
    </temperatureDependence>
</comment>
<comment type="subunit">
    <text evidence="3">Homotetramer.</text>
</comment>
<comment type="similarity">
    <text evidence="5">Belongs to the hyi family.</text>
</comment>
<organism>
    <name type="scientific">Mesorhizobium japonicum (strain LMG 29417 / CECT 9101 / MAFF 303099)</name>
    <name type="common">Mesorhizobium loti (strain MAFF 303099)</name>
    <dbReference type="NCBI Taxonomy" id="266835"/>
    <lineage>
        <taxon>Bacteria</taxon>
        <taxon>Pseudomonadati</taxon>
        <taxon>Pseudomonadota</taxon>
        <taxon>Alphaproteobacteria</taxon>
        <taxon>Hyphomicrobiales</taxon>
        <taxon>Phyllobacteriaceae</taxon>
        <taxon>Mesorhizobium</taxon>
    </lineage>
</organism>
<feature type="chain" id="PRO_0000435307" description="L-ribulose 3-epimerase">
    <location>
        <begin position="1"/>
        <end position="297"/>
    </location>
</feature>
<feature type="active site" description="Proton donor/acceptor" evidence="2">
    <location>
        <position position="147"/>
    </location>
</feature>
<feature type="active site" description="Proton donor/acceptor" evidence="2">
    <location>
        <position position="241"/>
    </location>
</feature>
<feature type="binding site" evidence="1">
    <location>
        <position position="147"/>
    </location>
    <ligand>
        <name>Mn(2+)</name>
        <dbReference type="ChEBI" id="CHEBI:29035"/>
    </ligand>
</feature>
<feature type="binding site" evidence="1">
    <location>
        <position position="153"/>
    </location>
    <ligand>
        <name>substrate</name>
    </ligand>
</feature>
<feature type="binding site" evidence="1">
    <location>
        <begin position="180"/>
        <end position="183"/>
    </location>
    <ligand>
        <name>substrate</name>
    </ligand>
</feature>
<feature type="binding site" evidence="1">
    <location>
        <position position="180"/>
    </location>
    <ligand>
        <name>Mn(2+)</name>
        <dbReference type="ChEBI" id="CHEBI:29035"/>
    </ligand>
</feature>
<feature type="binding site" evidence="1">
    <location>
        <position position="206"/>
    </location>
    <ligand>
        <name>Mn(2+)</name>
        <dbReference type="ChEBI" id="CHEBI:29035"/>
    </ligand>
</feature>
<feature type="binding site" evidence="1">
    <location>
        <position position="212"/>
    </location>
    <ligand>
        <name>substrate</name>
    </ligand>
</feature>
<feature type="binding site" evidence="1">
    <location>
        <position position="241"/>
    </location>
    <ligand>
        <name>Mn(2+)</name>
        <dbReference type="ChEBI" id="CHEBI:29035"/>
    </ligand>
</feature>
<sequence>MARIGIHSFVWSASSAQSELERTLANTREAGFDLIEFSYLDPADVDIGGLAKRIADLGLGVAISIGLPGDGDISSADKAVAARGVEILNETVALTRDLGGRKVAGILSAGHGLQLEAPTRDQWSRSTAALAKVAETAKAAGVTLNLEIVNRFESNLLNTAAQGLAFIEDTGSDNIFLHLDTFHMNIEEADVGLAIRHAAGKIGYVHIGESHRGFLGTGNIDFAAIFDALTAVGYADDLSFESFSSEIVDENLSKKTAIWRNLWADNMALAKHARAFIGLGLETARRKAELVSARHKP</sequence>
<gene>
    <name type="ordered locus">mll3595</name>
</gene>
<name>LR3E_RHILO</name>